<reference key="1">
    <citation type="journal article" date="2014" name="Stand. Genomic Sci.">
        <title>Complete genome sequence of Anabaena variabilis ATCC 29413.</title>
        <authorList>
            <person name="Thiel T."/>
            <person name="Pratte B.S."/>
            <person name="Zhong J."/>
            <person name="Goodwin L."/>
            <person name="Copeland A."/>
            <person name="Lucas S."/>
            <person name="Han C."/>
            <person name="Pitluck S."/>
            <person name="Land M.L."/>
            <person name="Kyrpides N.C."/>
            <person name="Woyke T."/>
        </authorList>
    </citation>
    <scope>NUCLEOTIDE SEQUENCE [LARGE SCALE GENOMIC DNA]</scope>
    <source>
        <strain>ATCC 29413 / PCC 7937</strain>
    </source>
</reference>
<accession>Q3M7P3</accession>
<organism>
    <name type="scientific">Trichormus variabilis (strain ATCC 29413 / PCC 7937)</name>
    <name type="common">Anabaena variabilis</name>
    <dbReference type="NCBI Taxonomy" id="240292"/>
    <lineage>
        <taxon>Bacteria</taxon>
        <taxon>Bacillati</taxon>
        <taxon>Cyanobacteriota</taxon>
        <taxon>Cyanophyceae</taxon>
        <taxon>Nostocales</taxon>
        <taxon>Nostocaceae</taxon>
        <taxon>Trichormus</taxon>
    </lineage>
</organism>
<name>ANMK_TRIV2</name>
<feature type="chain" id="PRO_0000249969" description="Anhydro-N-acetylmuramic acid kinase">
    <location>
        <begin position="1"/>
        <end position="392"/>
    </location>
</feature>
<feature type="binding site" evidence="1">
    <location>
        <begin position="19"/>
        <end position="26"/>
    </location>
    <ligand>
        <name>ATP</name>
        <dbReference type="ChEBI" id="CHEBI:30616"/>
    </ligand>
</feature>
<comment type="function">
    <text evidence="1">Catalyzes the specific phosphorylation of 1,6-anhydro-N-acetylmuramic acid (anhMurNAc) with the simultaneous cleavage of the 1,6-anhydro ring, generating MurNAc-6-P. Is required for the utilization of anhMurNAc either imported from the medium or derived from its own cell wall murein, and thus plays a role in cell wall recycling.</text>
</comment>
<comment type="catalytic activity">
    <reaction evidence="1">
        <text>1,6-anhydro-N-acetyl-beta-muramate + ATP + H2O = N-acetyl-D-muramate 6-phosphate + ADP + H(+)</text>
        <dbReference type="Rhea" id="RHEA:24952"/>
        <dbReference type="ChEBI" id="CHEBI:15377"/>
        <dbReference type="ChEBI" id="CHEBI:15378"/>
        <dbReference type="ChEBI" id="CHEBI:30616"/>
        <dbReference type="ChEBI" id="CHEBI:58690"/>
        <dbReference type="ChEBI" id="CHEBI:58722"/>
        <dbReference type="ChEBI" id="CHEBI:456216"/>
        <dbReference type="EC" id="2.7.1.170"/>
    </reaction>
</comment>
<comment type="pathway">
    <text evidence="1">Amino-sugar metabolism; 1,6-anhydro-N-acetylmuramate degradation.</text>
</comment>
<comment type="pathway">
    <text evidence="1">Cell wall biogenesis; peptidoglycan recycling.</text>
</comment>
<comment type="similarity">
    <text evidence="1">Belongs to the anhydro-N-acetylmuramic acid kinase family.</text>
</comment>
<gene>
    <name evidence="1" type="primary">anmK</name>
    <name type="ordered locus">Ava_3386</name>
</gene>
<proteinExistence type="inferred from homology"/>
<keyword id="KW-0067">ATP-binding</keyword>
<keyword id="KW-0119">Carbohydrate metabolism</keyword>
<keyword id="KW-0418">Kinase</keyword>
<keyword id="KW-0547">Nucleotide-binding</keyword>
<keyword id="KW-0808">Transferase</keyword>
<evidence type="ECO:0000255" key="1">
    <source>
        <dbReference type="HAMAP-Rule" id="MF_01270"/>
    </source>
</evidence>
<sequence>MYSSQASALPSRVIGLISGTSVDGIDAALVEITGTELDLKVELLAGKTYPYPAELRERILAVCAGEAISMLELADMDDAIALAFAQAAQNIQIGYQPVNLIGSHGQTVYHRPPKEAGVGKKTLGYTLQLGRGEMIAYLTGITTVSNFRVADIAVGGHGAPLVPRVDAFLLSHPHESRCIQNLGGIGNLAYIPARTDGWLSQIRGWDTGPSNSLLDLAVERLTAGAKTYDEDGQWAASGTPCYPLVEKWLTHEYFHLSPPKSTGRELFGVAYLNQCFQDAEPYQLSPADMLATLTELTVASIVHSYRTFLPQMPQRVFLCGGGSRNLYLKQRLQLALETIPVLTTDEAGVSADFKEAIAFAVLAHWRQLGIPGNLPTATGAPQEVLLGEIHQG</sequence>
<dbReference type="EC" id="2.7.1.170" evidence="1"/>
<dbReference type="EMBL" id="CP000117">
    <property type="protein sequence ID" value="ABA22993.1"/>
    <property type="molecule type" value="Genomic_DNA"/>
</dbReference>
<dbReference type="SMR" id="Q3M7P3"/>
<dbReference type="STRING" id="240292.Ava_3386"/>
<dbReference type="KEGG" id="ava:Ava_3386"/>
<dbReference type="eggNOG" id="COG2377">
    <property type="taxonomic scope" value="Bacteria"/>
</dbReference>
<dbReference type="HOGENOM" id="CLU_038782_1_0_3"/>
<dbReference type="UniPathway" id="UPA00343"/>
<dbReference type="UniPathway" id="UPA00544"/>
<dbReference type="Proteomes" id="UP000002533">
    <property type="component" value="Chromosome"/>
</dbReference>
<dbReference type="GO" id="GO:0005524">
    <property type="term" value="F:ATP binding"/>
    <property type="evidence" value="ECO:0007669"/>
    <property type="project" value="UniProtKB-UniRule"/>
</dbReference>
<dbReference type="GO" id="GO:0016301">
    <property type="term" value="F:kinase activity"/>
    <property type="evidence" value="ECO:0007669"/>
    <property type="project" value="UniProtKB-KW"/>
</dbReference>
<dbReference type="GO" id="GO:0016773">
    <property type="term" value="F:phosphotransferase activity, alcohol group as acceptor"/>
    <property type="evidence" value="ECO:0007669"/>
    <property type="project" value="UniProtKB-UniRule"/>
</dbReference>
<dbReference type="GO" id="GO:0097175">
    <property type="term" value="P:1,6-anhydro-N-acetyl-beta-muramic acid catabolic process"/>
    <property type="evidence" value="ECO:0007669"/>
    <property type="project" value="UniProtKB-UniRule"/>
</dbReference>
<dbReference type="GO" id="GO:0006040">
    <property type="term" value="P:amino sugar metabolic process"/>
    <property type="evidence" value="ECO:0007669"/>
    <property type="project" value="InterPro"/>
</dbReference>
<dbReference type="GO" id="GO:0009254">
    <property type="term" value="P:peptidoglycan turnover"/>
    <property type="evidence" value="ECO:0007669"/>
    <property type="project" value="UniProtKB-UniRule"/>
</dbReference>
<dbReference type="CDD" id="cd24050">
    <property type="entry name" value="ASKHA_NBD_ANMK"/>
    <property type="match status" value="1"/>
</dbReference>
<dbReference type="Gene3D" id="3.30.420.40">
    <property type="match status" value="2"/>
</dbReference>
<dbReference type="HAMAP" id="MF_01270">
    <property type="entry name" value="AnhMurNAc_kinase"/>
    <property type="match status" value="1"/>
</dbReference>
<dbReference type="InterPro" id="IPR005338">
    <property type="entry name" value="Anhydro_N_Ac-Mur_kinase"/>
</dbReference>
<dbReference type="InterPro" id="IPR043129">
    <property type="entry name" value="ATPase_NBD"/>
</dbReference>
<dbReference type="NCBIfam" id="NF007143">
    <property type="entry name" value="PRK09585.2-2"/>
    <property type="match status" value="1"/>
</dbReference>
<dbReference type="NCBIfam" id="NF007148">
    <property type="entry name" value="PRK09585.3-2"/>
    <property type="match status" value="1"/>
</dbReference>
<dbReference type="PANTHER" id="PTHR30605">
    <property type="entry name" value="ANHYDRO-N-ACETYLMURAMIC ACID KINASE"/>
    <property type="match status" value="1"/>
</dbReference>
<dbReference type="PANTHER" id="PTHR30605:SF0">
    <property type="entry name" value="ANHYDRO-N-ACETYLMURAMIC ACID KINASE"/>
    <property type="match status" value="1"/>
</dbReference>
<dbReference type="Pfam" id="PF03702">
    <property type="entry name" value="AnmK"/>
    <property type="match status" value="1"/>
</dbReference>
<dbReference type="SUPFAM" id="SSF53067">
    <property type="entry name" value="Actin-like ATPase domain"/>
    <property type="match status" value="1"/>
</dbReference>
<protein>
    <recommendedName>
        <fullName evidence="1">Anhydro-N-acetylmuramic acid kinase</fullName>
        <ecNumber evidence="1">2.7.1.170</ecNumber>
    </recommendedName>
    <alternativeName>
        <fullName evidence="1">AnhMurNAc kinase</fullName>
    </alternativeName>
</protein>